<comment type="function">
    <text evidence="1">Core component of nucleosome. Nucleosomes wrap and compact DNA into chromatin, limiting DNA accessibility to the cellular machineries which require DNA as a template. Histones thereby play a central role in transcription regulation, DNA repair, DNA replication and chromosomal stability. DNA accessibility is regulated via a complex set of post-translational modifications of histones, also called histone code, and nucleosome remodeling (By similarity).</text>
</comment>
<comment type="subunit">
    <text evidence="1">The nucleosome is a histone octamer containing two molecules each of H2A, H2B, H3 and H4 assembled in one H3-H4 heterotetramer and two H2A-H2B heterodimers. The octamer wraps approximately 147 bp of DNA (By similarity).</text>
</comment>
<comment type="interaction">
    <interactant intactId="EBI-10294329">
        <id>Q99525</id>
    </interactant>
    <interactant intactId="EBI-741181">
        <id>Q6RW13</id>
        <label>AGTRAP</label>
    </interactant>
    <organismsDiffer>false</organismsDiffer>
    <experiments>3</experiments>
</comment>
<comment type="interaction">
    <interactant intactId="EBI-10294329">
        <id>Q99525</id>
    </interactant>
    <interactant intactId="EBI-1220105">
        <id>P02654</id>
        <label>APOC1</label>
    </interactant>
    <organismsDiffer>false</organismsDiffer>
    <experiments>3</experiments>
</comment>
<comment type="interaction">
    <interactant intactId="EBI-10294329">
        <id>Q99525</id>
    </interactant>
    <interactant intactId="EBI-7062247">
        <id>Q9UHD4</id>
        <label>CIDEB</label>
    </interactant>
    <organismsDiffer>false</organismsDiffer>
    <experiments>3</experiments>
</comment>
<comment type="interaction">
    <interactant intactId="EBI-10294329">
        <id>Q99525</id>
    </interactant>
    <interactant intactId="EBI-12836320">
        <id>Q92915-2</id>
        <label>FGF14</label>
    </interactant>
    <organismsDiffer>false</organismsDiffer>
    <experiments>3</experiments>
</comment>
<comment type="interaction">
    <interactant intactId="EBI-10294329">
        <id>Q99525</id>
    </interactant>
    <interactant intactId="EBI-3918971">
        <id>Q9Y680</id>
        <label>FKBP7</label>
    </interactant>
    <organismsDiffer>false</organismsDiffer>
    <experiments>3</experiments>
</comment>
<comment type="interaction">
    <interactant intactId="EBI-10294329">
        <id>Q99525</id>
    </interactant>
    <interactant intactId="EBI-1042937">
        <id>Q8WWC4</id>
        <label>MAIP1</label>
    </interactant>
    <organismsDiffer>false</organismsDiffer>
    <experiments>3</experiments>
</comment>
<comment type="interaction">
    <interactant intactId="EBI-10294329">
        <id>Q99525</id>
    </interactant>
    <interactant intactId="EBI-17589229">
        <id>Q6NTF9-3</id>
        <label>RHBDD2</label>
    </interactant>
    <organismsDiffer>false</organismsDiffer>
    <experiments>3</experiments>
</comment>
<comment type="interaction">
    <interactant intactId="EBI-10294329">
        <id>Q99525</id>
    </interactant>
    <interactant intactId="EBI-11603430">
        <id>Q6PL24</id>
        <label>TMED8</label>
    </interactant>
    <organismsDiffer>false</organismsDiffer>
    <experiments>3</experiments>
</comment>
<comment type="subcellular location">
    <subcellularLocation>
        <location evidence="1">Nucleus</location>
    </subcellularLocation>
    <subcellularLocation>
        <location evidence="1">Chromosome</location>
    </subcellularLocation>
</comment>
<comment type="similarity">
    <text evidence="2">Belongs to the histone H4 family.</text>
</comment>
<gene>
    <name evidence="3" type="primary">H4C7</name>
    <name type="synonym">H4/L</name>
    <name type="synonym">H4FL</name>
    <name evidence="3" type="synonym">HIST1H4G</name>
</gene>
<dbReference type="EMBL" id="Z80788">
    <property type="protein sequence ID" value="CAB02550.1"/>
    <property type="molecule type" value="Genomic_DNA"/>
</dbReference>
<dbReference type="EMBL" id="AY128660">
    <property type="protein sequence ID" value="AAN01445.1"/>
    <property type="molecule type" value="Genomic_DNA"/>
</dbReference>
<dbReference type="EMBL" id="AL031777">
    <property type="status" value="NOT_ANNOTATED_CDS"/>
    <property type="molecule type" value="Genomic_DNA"/>
</dbReference>
<dbReference type="EMBL" id="CH471087">
    <property type="protein sequence ID" value="EAW55550.1"/>
    <property type="molecule type" value="Genomic_DNA"/>
</dbReference>
<dbReference type="EMBL" id="BC126276">
    <property type="protein sequence ID" value="AAI26277.1"/>
    <property type="molecule type" value="mRNA"/>
</dbReference>
<dbReference type="EMBL" id="BC126278">
    <property type="protein sequence ID" value="AAI26279.1"/>
    <property type="molecule type" value="mRNA"/>
</dbReference>
<dbReference type="CCDS" id="CCDS4599.1"/>
<dbReference type="RefSeq" id="NP_003538.1">
    <property type="nucleotide sequence ID" value="NM_003547.3"/>
</dbReference>
<dbReference type="SMR" id="Q99525"/>
<dbReference type="BioGRID" id="113965">
    <property type="interactions" value="35"/>
</dbReference>
<dbReference type="FunCoup" id="Q99525">
    <property type="interactions" value="6"/>
</dbReference>
<dbReference type="IntAct" id="Q99525">
    <property type="interactions" value="11"/>
</dbReference>
<dbReference type="STRING" id="9606.ENSP00000477870"/>
<dbReference type="PhosphoSitePlus" id="Q99525"/>
<dbReference type="BioMuta" id="HIST1H4G"/>
<dbReference type="DMDM" id="74752149"/>
<dbReference type="jPOST" id="Q99525"/>
<dbReference type="MassIVE" id="Q99525"/>
<dbReference type="PaxDb" id="9606-ENSP00000477870"/>
<dbReference type="PeptideAtlas" id="Q99525"/>
<dbReference type="ProteomicsDB" id="78310"/>
<dbReference type="DNASU" id="8369"/>
<dbReference type="Ensembl" id="ENST00000611444.2">
    <property type="protein sequence ID" value="ENSP00000477870.2"/>
    <property type="gene ID" value="ENSG00000275663.2"/>
</dbReference>
<dbReference type="GeneID" id="8369"/>
<dbReference type="KEGG" id="hsa:8369"/>
<dbReference type="MANE-Select" id="ENST00000611444.2">
    <property type="protein sequence ID" value="ENSP00000477870.2"/>
    <property type="RefSeq nucleotide sequence ID" value="NM_003547.3"/>
    <property type="RefSeq protein sequence ID" value="NP_003538.1"/>
</dbReference>
<dbReference type="UCSC" id="uc003nhf.4">
    <property type="organism name" value="human"/>
</dbReference>
<dbReference type="AGR" id="HGNC:4792"/>
<dbReference type="CTD" id="8369"/>
<dbReference type="DisGeNET" id="8369"/>
<dbReference type="GeneCards" id="H4C7"/>
<dbReference type="HGNC" id="HGNC:4792">
    <property type="gene designation" value="H4C7"/>
</dbReference>
<dbReference type="HPA" id="ENSG00000275663">
    <property type="expression patterns" value="Not detected"/>
</dbReference>
<dbReference type="MIM" id="602832">
    <property type="type" value="gene"/>
</dbReference>
<dbReference type="neXtProt" id="NX_Q99525"/>
<dbReference type="OpenTargets" id="ENSG00000275663"/>
<dbReference type="VEuPathDB" id="HostDB:ENSG00000275663"/>
<dbReference type="eggNOG" id="KOG3467">
    <property type="taxonomic scope" value="Eukaryota"/>
</dbReference>
<dbReference type="GeneTree" id="ENSGT00990000203553"/>
<dbReference type="HOGENOM" id="CLU_109117_2_3_1"/>
<dbReference type="InParanoid" id="Q99525"/>
<dbReference type="OMA" id="ITKCTIR"/>
<dbReference type="OrthoDB" id="9533752at2759"/>
<dbReference type="PAN-GO" id="Q99525">
    <property type="GO annotations" value="2 GO annotations based on evolutionary models"/>
</dbReference>
<dbReference type="PhylomeDB" id="Q99525"/>
<dbReference type="PathwayCommons" id="Q99525"/>
<dbReference type="SignaLink" id="Q99525"/>
<dbReference type="BioGRID-ORCS" id="8369">
    <property type="hits" value="17 hits in 1133 CRISPR screens"/>
</dbReference>
<dbReference type="GeneWiki" id="HIST1H4G"/>
<dbReference type="GenomeRNAi" id="8369"/>
<dbReference type="Pharos" id="Q99525">
    <property type="development level" value="Tdark"/>
</dbReference>
<dbReference type="PRO" id="PR:Q99525"/>
<dbReference type="Proteomes" id="UP000005640">
    <property type="component" value="Chromosome 6"/>
</dbReference>
<dbReference type="RNAct" id="Q99525">
    <property type="molecule type" value="protein"/>
</dbReference>
<dbReference type="Bgee" id="ENSG00000275663">
    <property type="expression patterns" value="Expressed in tibialis anterior and 12 other cell types or tissues"/>
</dbReference>
<dbReference type="GO" id="GO:0000786">
    <property type="term" value="C:nucleosome"/>
    <property type="evidence" value="ECO:0007669"/>
    <property type="project" value="UniProtKB-KW"/>
</dbReference>
<dbReference type="GO" id="GO:0005634">
    <property type="term" value="C:nucleus"/>
    <property type="evidence" value="ECO:0007005"/>
    <property type="project" value="UniProtKB"/>
</dbReference>
<dbReference type="GO" id="GO:0003677">
    <property type="term" value="F:DNA binding"/>
    <property type="evidence" value="ECO:0000318"/>
    <property type="project" value="GO_Central"/>
</dbReference>
<dbReference type="GO" id="GO:0046982">
    <property type="term" value="F:protein heterodimerization activity"/>
    <property type="evidence" value="ECO:0007669"/>
    <property type="project" value="InterPro"/>
</dbReference>
<dbReference type="GO" id="GO:0030527">
    <property type="term" value="F:structural constituent of chromatin"/>
    <property type="evidence" value="ECO:0007669"/>
    <property type="project" value="InterPro"/>
</dbReference>
<dbReference type="GO" id="GO:0006334">
    <property type="term" value="P:nucleosome assembly"/>
    <property type="evidence" value="ECO:0000318"/>
    <property type="project" value="GO_Central"/>
</dbReference>
<dbReference type="CDD" id="cd22912">
    <property type="entry name" value="HFD_H4"/>
    <property type="match status" value="1"/>
</dbReference>
<dbReference type="FunFam" id="1.10.20.10:FF:000012">
    <property type="entry name" value="Histone H4"/>
    <property type="match status" value="1"/>
</dbReference>
<dbReference type="Gene3D" id="1.10.20.10">
    <property type="entry name" value="Histone, subunit A"/>
    <property type="match status" value="1"/>
</dbReference>
<dbReference type="InterPro" id="IPR009072">
    <property type="entry name" value="Histone-fold"/>
</dbReference>
<dbReference type="InterPro" id="IPR001951">
    <property type="entry name" value="Histone_H4"/>
</dbReference>
<dbReference type="PANTHER" id="PTHR10484">
    <property type="entry name" value="HISTONE H4"/>
    <property type="match status" value="1"/>
</dbReference>
<dbReference type="PRINTS" id="PR00623">
    <property type="entry name" value="HISTONEH4"/>
</dbReference>
<dbReference type="SMART" id="SM00417">
    <property type="entry name" value="H4"/>
    <property type="match status" value="1"/>
</dbReference>
<dbReference type="SUPFAM" id="SSF47113">
    <property type="entry name" value="Histone-fold"/>
    <property type="match status" value="1"/>
</dbReference>
<organism>
    <name type="scientific">Homo sapiens</name>
    <name type="common">Human</name>
    <dbReference type="NCBI Taxonomy" id="9606"/>
    <lineage>
        <taxon>Eukaryota</taxon>
        <taxon>Metazoa</taxon>
        <taxon>Chordata</taxon>
        <taxon>Craniata</taxon>
        <taxon>Vertebrata</taxon>
        <taxon>Euteleostomi</taxon>
        <taxon>Mammalia</taxon>
        <taxon>Eutheria</taxon>
        <taxon>Euarchontoglires</taxon>
        <taxon>Primates</taxon>
        <taxon>Haplorrhini</taxon>
        <taxon>Catarrhini</taxon>
        <taxon>Hominidae</taxon>
        <taxon>Homo</taxon>
    </lineage>
</organism>
<proteinExistence type="evidence at protein level"/>
<keyword id="KW-0158">Chromosome</keyword>
<keyword id="KW-0238">DNA-binding</keyword>
<keyword id="KW-0544">Nucleosome core</keyword>
<keyword id="KW-0539">Nucleus</keyword>
<keyword id="KW-1267">Proteomics identification</keyword>
<keyword id="KW-1185">Reference proteome</keyword>
<accession>Q99525</accession>
<feature type="chain" id="PRO_0000324392" description="Histone H4-like protein type G">
    <location>
        <begin position="1"/>
        <end position="98"/>
    </location>
</feature>
<feature type="DNA-binding region" evidence="1">
    <location>
        <begin position="17"/>
        <end position="21"/>
    </location>
</feature>
<protein>
    <recommendedName>
        <fullName>Histone H4-like protein type G</fullName>
    </recommendedName>
    <alternativeName>
        <fullName evidence="3">H4-clustered histone 7</fullName>
    </alternativeName>
</protein>
<reference key="1">
    <citation type="journal article" date="1997" name="Genomics">
        <title>Human histone gene organization: nonregular arrangement within a large cluster.</title>
        <authorList>
            <person name="Albig W."/>
            <person name="Kioschis P."/>
            <person name="Poustka A."/>
            <person name="Meergans K."/>
            <person name="Doenecke D."/>
        </authorList>
    </citation>
    <scope>NUCLEOTIDE SEQUENCE [GENOMIC DNA]</scope>
</reference>
<reference key="2">
    <citation type="journal article" date="2002" name="Genomics">
        <title>The human and mouse replication-dependent histone genes.</title>
        <authorList>
            <person name="Marzluff W.F."/>
            <person name="Gongidi P."/>
            <person name="Woods K.R."/>
            <person name="Jin J."/>
            <person name="Maltais L.J."/>
        </authorList>
    </citation>
    <scope>NUCLEOTIDE SEQUENCE [GENOMIC DNA]</scope>
</reference>
<reference key="3">
    <citation type="journal article" date="2003" name="Nature">
        <title>The DNA sequence and analysis of human chromosome 6.</title>
        <authorList>
            <person name="Mungall A.J."/>
            <person name="Palmer S.A."/>
            <person name="Sims S.K."/>
            <person name="Edwards C.A."/>
            <person name="Ashurst J.L."/>
            <person name="Wilming L."/>
            <person name="Jones M.C."/>
            <person name="Horton R."/>
            <person name="Hunt S.E."/>
            <person name="Scott C.E."/>
            <person name="Gilbert J.G.R."/>
            <person name="Clamp M.E."/>
            <person name="Bethel G."/>
            <person name="Milne S."/>
            <person name="Ainscough R."/>
            <person name="Almeida J.P."/>
            <person name="Ambrose K.D."/>
            <person name="Andrews T.D."/>
            <person name="Ashwell R.I.S."/>
            <person name="Babbage A.K."/>
            <person name="Bagguley C.L."/>
            <person name="Bailey J."/>
            <person name="Banerjee R."/>
            <person name="Barker D.J."/>
            <person name="Barlow K.F."/>
            <person name="Bates K."/>
            <person name="Beare D.M."/>
            <person name="Beasley H."/>
            <person name="Beasley O."/>
            <person name="Bird C.P."/>
            <person name="Blakey S.E."/>
            <person name="Bray-Allen S."/>
            <person name="Brook J."/>
            <person name="Brown A.J."/>
            <person name="Brown J.Y."/>
            <person name="Burford D.C."/>
            <person name="Burrill W."/>
            <person name="Burton J."/>
            <person name="Carder C."/>
            <person name="Carter N.P."/>
            <person name="Chapman J.C."/>
            <person name="Clark S.Y."/>
            <person name="Clark G."/>
            <person name="Clee C.M."/>
            <person name="Clegg S."/>
            <person name="Cobley V."/>
            <person name="Collier R.E."/>
            <person name="Collins J.E."/>
            <person name="Colman L.K."/>
            <person name="Corby N.R."/>
            <person name="Coville G.J."/>
            <person name="Culley K.M."/>
            <person name="Dhami P."/>
            <person name="Davies J."/>
            <person name="Dunn M."/>
            <person name="Earthrowl M.E."/>
            <person name="Ellington A.E."/>
            <person name="Evans K.A."/>
            <person name="Faulkner L."/>
            <person name="Francis M.D."/>
            <person name="Frankish A."/>
            <person name="Frankland J."/>
            <person name="French L."/>
            <person name="Garner P."/>
            <person name="Garnett J."/>
            <person name="Ghori M.J."/>
            <person name="Gilby L.M."/>
            <person name="Gillson C.J."/>
            <person name="Glithero R.J."/>
            <person name="Grafham D.V."/>
            <person name="Grant M."/>
            <person name="Gribble S."/>
            <person name="Griffiths C."/>
            <person name="Griffiths M.N.D."/>
            <person name="Hall R."/>
            <person name="Halls K.S."/>
            <person name="Hammond S."/>
            <person name="Harley J.L."/>
            <person name="Hart E.A."/>
            <person name="Heath P.D."/>
            <person name="Heathcott R."/>
            <person name="Holmes S.J."/>
            <person name="Howden P.J."/>
            <person name="Howe K.L."/>
            <person name="Howell G.R."/>
            <person name="Huckle E."/>
            <person name="Humphray S.J."/>
            <person name="Humphries M.D."/>
            <person name="Hunt A.R."/>
            <person name="Johnson C.M."/>
            <person name="Joy A.A."/>
            <person name="Kay M."/>
            <person name="Keenan S.J."/>
            <person name="Kimberley A.M."/>
            <person name="King A."/>
            <person name="Laird G.K."/>
            <person name="Langford C."/>
            <person name="Lawlor S."/>
            <person name="Leongamornlert D.A."/>
            <person name="Leversha M."/>
            <person name="Lloyd C.R."/>
            <person name="Lloyd D.M."/>
            <person name="Loveland J.E."/>
            <person name="Lovell J."/>
            <person name="Martin S."/>
            <person name="Mashreghi-Mohammadi M."/>
            <person name="Maslen G.L."/>
            <person name="Matthews L."/>
            <person name="McCann O.T."/>
            <person name="McLaren S.J."/>
            <person name="McLay K."/>
            <person name="McMurray A."/>
            <person name="Moore M.J.F."/>
            <person name="Mullikin J.C."/>
            <person name="Niblett D."/>
            <person name="Nickerson T."/>
            <person name="Novik K.L."/>
            <person name="Oliver K."/>
            <person name="Overton-Larty E.K."/>
            <person name="Parker A."/>
            <person name="Patel R."/>
            <person name="Pearce A.V."/>
            <person name="Peck A.I."/>
            <person name="Phillimore B.J.C.T."/>
            <person name="Phillips S."/>
            <person name="Plumb R.W."/>
            <person name="Porter K.M."/>
            <person name="Ramsey Y."/>
            <person name="Ranby S.A."/>
            <person name="Rice C.M."/>
            <person name="Ross M.T."/>
            <person name="Searle S.M."/>
            <person name="Sehra H.K."/>
            <person name="Sheridan E."/>
            <person name="Skuce C.D."/>
            <person name="Smith S."/>
            <person name="Smith M."/>
            <person name="Spraggon L."/>
            <person name="Squares S.L."/>
            <person name="Steward C.A."/>
            <person name="Sycamore N."/>
            <person name="Tamlyn-Hall G."/>
            <person name="Tester J."/>
            <person name="Theaker A.J."/>
            <person name="Thomas D.W."/>
            <person name="Thorpe A."/>
            <person name="Tracey A."/>
            <person name="Tromans A."/>
            <person name="Tubby B."/>
            <person name="Wall M."/>
            <person name="Wallis J.M."/>
            <person name="West A.P."/>
            <person name="White S.S."/>
            <person name="Whitehead S.L."/>
            <person name="Whittaker H."/>
            <person name="Wild A."/>
            <person name="Willey D.J."/>
            <person name="Wilmer T.E."/>
            <person name="Wood J.M."/>
            <person name="Wray P.W."/>
            <person name="Wyatt J.C."/>
            <person name="Young L."/>
            <person name="Younger R.M."/>
            <person name="Bentley D.R."/>
            <person name="Coulson A."/>
            <person name="Durbin R.M."/>
            <person name="Hubbard T."/>
            <person name="Sulston J.E."/>
            <person name="Dunham I."/>
            <person name="Rogers J."/>
            <person name="Beck S."/>
        </authorList>
    </citation>
    <scope>NUCLEOTIDE SEQUENCE [LARGE SCALE GENOMIC DNA]</scope>
</reference>
<reference key="4">
    <citation type="submission" date="2005-07" db="EMBL/GenBank/DDBJ databases">
        <authorList>
            <person name="Mural R.J."/>
            <person name="Istrail S."/>
            <person name="Sutton G.G."/>
            <person name="Florea L."/>
            <person name="Halpern A.L."/>
            <person name="Mobarry C.M."/>
            <person name="Lippert R."/>
            <person name="Walenz B."/>
            <person name="Shatkay H."/>
            <person name="Dew I."/>
            <person name="Miller J.R."/>
            <person name="Flanigan M.J."/>
            <person name="Edwards N.J."/>
            <person name="Bolanos R."/>
            <person name="Fasulo D."/>
            <person name="Halldorsson B.V."/>
            <person name="Hannenhalli S."/>
            <person name="Turner R."/>
            <person name="Yooseph S."/>
            <person name="Lu F."/>
            <person name="Nusskern D.R."/>
            <person name="Shue B.C."/>
            <person name="Zheng X.H."/>
            <person name="Zhong F."/>
            <person name="Delcher A.L."/>
            <person name="Huson D.H."/>
            <person name="Kravitz S.A."/>
            <person name="Mouchard L."/>
            <person name="Reinert K."/>
            <person name="Remington K.A."/>
            <person name="Clark A.G."/>
            <person name="Waterman M.S."/>
            <person name="Eichler E.E."/>
            <person name="Adams M.D."/>
            <person name="Hunkapiller M.W."/>
            <person name="Myers E.W."/>
            <person name="Venter J.C."/>
        </authorList>
    </citation>
    <scope>NUCLEOTIDE SEQUENCE [LARGE SCALE GENOMIC DNA]</scope>
</reference>
<reference key="5">
    <citation type="journal article" date="2004" name="Genome Res.">
        <title>The status, quality, and expansion of the NIH full-length cDNA project: the Mammalian Gene Collection (MGC).</title>
        <authorList>
            <consortium name="The MGC Project Team"/>
        </authorList>
    </citation>
    <scope>NUCLEOTIDE SEQUENCE [LARGE SCALE MRNA]</scope>
</reference>
<evidence type="ECO:0000250" key="1"/>
<evidence type="ECO:0000305" key="2"/>
<evidence type="ECO:0000312" key="3">
    <source>
        <dbReference type="HGNC" id="HGNC:4792"/>
    </source>
</evidence>
<name>H4G_HUMAN</name>
<sequence>MSVRGKAGKGLGKGGAKCHRKVLSDNIQGITKCTIRRLARHGGVKRILGLIYEETRRVFKVFLENVIWYAVTNTEHAKRKTVTAMAVVYVLKRQGRTL</sequence>